<accession>B9KDZ6</accession>
<sequence>MSSYIPYVVEKTSRGERSYDIYSRLLKDRIIMLSGEINDDLAASIVAQLLFLEAEDPQKDIYLYINSPGGVVTSGFSIYDTMNYIKADVSTICIGQAASMGAFLLSCGAPGKRFALPNSRIMIHQPLGGARGQATDIEIQAKEILRLKAILNDILAKNTKQKLSKIEKDTDRDFFMSAIEAKEYGLIDKVLEKSFK</sequence>
<evidence type="ECO:0000255" key="1">
    <source>
        <dbReference type="HAMAP-Rule" id="MF_00444"/>
    </source>
</evidence>
<feature type="chain" id="PRO_1000135149" description="ATP-dependent Clp protease proteolytic subunit">
    <location>
        <begin position="1"/>
        <end position="196"/>
    </location>
</feature>
<feature type="active site" description="Nucleophile" evidence="1">
    <location>
        <position position="99"/>
    </location>
</feature>
<feature type="active site" evidence="1">
    <location>
        <position position="124"/>
    </location>
</feature>
<keyword id="KW-0963">Cytoplasm</keyword>
<keyword id="KW-0378">Hydrolase</keyword>
<keyword id="KW-0645">Protease</keyword>
<keyword id="KW-1185">Reference proteome</keyword>
<keyword id="KW-0720">Serine protease</keyword>
<gene>
    <name evidence="1" type="primary">clpP</name>
    <name type="ordered locus">Cla_1479</name>
</gene>
<proteinExistence type="inferred from homology"/>
<name>CLPP_CAMLR</name>
<comment type="function">
    <text evidence="1">Cleaves peptides in various proteins in a process that requires ATP hydrolysis. Has a chymotrypsin-like activity. Plays a major role in the degradation of misfolded proteins.</text>
</comment>
<comment type="catalytic activity">
    <reaction evidence="1">
        <text>Hydrolysis of proteins to small peptides in the presence of ATP and magnesium. alpha-casein is the usual test substrate. In the absence of ATP, only oligopeptides shorter than five residues are hydrolyzed (such as succinyl-Leu-Tyr-|-NHMec, and Leu-Tyr-Leu-|-Tyr-Trp, in which cleavage of the -Tyr-|-Leu- and -Tyr-|-Trp bonds also occurs).</text>
        <dbReference type="EC" id="3.4.21.92"/>
    </reaction>
</comment>
<comment type="subunit">
    <text evidence="1">Fourteen ClpP subunits assemble into 2 heptameric rings which stack back to back to give a disk-like structure with a central cavity, resembling the structure of eukaryotic proteasomes.</text>
</comment>
<comment type="subcellular location">
    <subcellularLocation>
        <location evidence="1">Cytoplasm</location>
    </subcellularLocation>
</comment>
<comment type="similarity">
    <text evidence="1">Belongs to the peptidase S14 family.</text>
</comment>
<organism>
    <name type="scientific">Campylobacter lari (strain RM2100 / D67 / ATCC BAA-1060)</name>
    <dbReference type="NCBI Taxonomy" id="306263"/>
    <lineage>
        <taxon>Bacteria</taxon>
        <taxon>Pseudomonadati</taxon>
        <taxon>Campylobacterota</taxon>
        <taxon>Epsilonproteobacteria</taxon>
        <taxon>Campylobacterales</taxon>
        <taxon>Campylobacteraceae</taxon>
        <taxon>Campylobacter</taxon>
    </lineage>
</organism>
<protein>
    <recommendedName>
        <fullName evidence="1">ATP-dependent Clp protease proteolytic subunit</fullName>
        <ecNumber evidence="1">3.4.21.92</ecNumber>
    </recommendedName>
    <alternativeName>
        <fullName evidence="1">Endopeptidase Clp</fullName>
    </alternativeName>
</protein>
<dbReference type="EC" id="3.4.21.92" evidence="1"/>
<dbReference type="EMBL" id="CP000932">
    <property type="protein sequence ID" value="ACM64784.1"/>
    <property type="molecule type" value="Genomic_DNA"/>
</dbReference>
<dbReference type="RefSeq" id="WP_012662167.1">
    <property type="nucleotide sequence ID" value="NC_012039.1"/>
</dbReference>
<dbReference type="SMR" id="B9KDZ6"/>
<dbReference type="STRING" id="306263.Cla_1479"/>
<dbReference type="MEROPS" id="S14.001"/>
<dbReference type="KEGG" id="cla:CLA_1479"/>
<dbReference type="PATRIC" id="fig|306263.5.peg.1460"/>
<dbReference type="eggNOG" id="COG0740">
    <property type="taxonomic scope" value="Bacteria"/>
</dbReference>
<dbReference type="HOGENOM" id="CLU_058707_3_2_7"/>
<dbReference type="Proteomes" id="UP000007727">
    <property type="component" value="Chromosome"/>
</dbReference>
<dbReference type="GO" id="GO:0005737">
    <property type="term" value="C:cytoplasm"/>
    <property type="evidence" value="ECO:0007669"/>
    <property type="project" value="UniProtKB-SubCell"/>
</dbReference>
<dbReference type="GO" id="GO:0009368">
    <property type="term" value="C:endopeptidase Clp complex"/>
    <property type="evidence" value="ECO:0007669"/>
    <property type="project" value="TreeGrafter"/>
</dbReference>
<dbReference type="GO" id="GO:0004176">
    <property type="term" value="F:ATP-dependent peptidase activity"/>
    <property type="evidence" value="ECO:0007669"/>
    <property type="project" value="InterPro"/>
</dbReference>
<dbReference type="GO" id="GO:0051117">
    <property type="term" value="F:ATPase binding"/>
    <property type="evidence" value="ECO:0007669"/>
    <property type="project" value="TreeGrafter"/>
</dbReference>
<dbReference type="GO" id="GO:0004252">
    <property type="term" value="F:serine-type endopeptidase activity"/>
    <property type="evidence" value="ECO:0007669"/>
    <property type="project" value="UniProtKB-UniRule"/>
</dbReference>
<dbReference type="GO" id="GO:0006515">
    <property type="term" value="P:protein quality control for misfolded or incompletely synthesized proteins"/>
    <property type="evidence" value="ECO:0007669"/>
    <property type="project" value="TreeGrafter"/>
</dbReference>
<dbReference type="CDD" id="cd07017">
    <property type="entry name" value="S14_ClpP_2"/>
    <property type="match status" value="1"/>
</dbReference>
<dbReference type="FunFam" id="3.90.226.10:FF:000001">
    <property type="entry name" value="ATP-dependent Clp protease proteolytic subunit"/>
    <property type="match status" value="1"/>
</dbReference>
<dbReference type="Gene3D" id="3.90.226.10">
    <property type="entry name" value="2-enoyl-CoA Hydratase, Chain A, domain 1"/>
    <property type="match status" value="1"/>
</dbReference>
<dbReference type="HAMAP" id="MF_00444">
    <property type="entry name" value="ClpP"/>
    <property type="match status" value="1"/>
</dbReference>
<dbReference type="InterPro" id="IPR001907">
    <property type="entry name" value="ClpP"/>
</dbReference>
<dbReference type="InterPro" id="IPR029045">
    <property type="entry name" value="ClpP/crotonase-like_dom_sf"/>
</dbReference>
<dbReference type="InterPro" id="IPR023562">
    <property type="entry name" value="ClpP/TepA"/>
</dbReference>
<dbReference type="InterPro" id="IPR033135">
    <property type="entry name" value="ClpP_His_AS"/>
</dbReference>
<dbReference type="InterPro" id="IPR018215">
    <property type="entry name" value="ClpP_Ser_AS"/>
</dbReference>
<dbReference type="NCBIfam" id="TIGR00493">
    <property type="entry name" value="clpP"/>
    <property type="match status" value="1"/>
</dbReference>
<dbReference type="NCBIfam" id="NF001368">
    <property type="entry name" value="PRK00277.1"/>
    <property type="match status" value="1"/>
</dbReference>
<dbReference type="NCBIfam" id="NF009205">
    <property type="entry name" value="PRK12553.1"/>
    <property type="match status" value="1"/>
</dbReference>
<dbReference type="PANTHER" id="PTHR10381">
    <property type="entry name" value="ATP-DEPENDENT CLP PROTEASE PROTEOLYTIC SUBUNIT"/>
    <property type="match status" value="1"/>
</dbReference>
<dbReference type="PANTHER" id="PTHR10381:SF70">
    <property type="entry name" value="ATP-DEPENDENT CLP PROTEASE PROTEOLYTIC SUBUNIT"/>
    <property type="match status" value="1"/>
</dbReference>
<dbReference type="Pfam" id="PF00574">
    <property type="entry name" value="CLP_protease"/>
    <property type="match status" value="1"/>
</dbReference>
<dbReference type="PRINTS" id="PR00127">
    <property type="entry name" value="CLPPROTEASEP"/>
</dbReference>
<dbReference type="SUPFAM" id="SSF52096">
    <property type="entry name" value="ClpP/crotonase"/>
    <property type="match status" value="1"/>
</dbReference>
<dbReference type="PROSITE" id="PS00382">
    <property type="entry name" value="CLP_PROTEASE_HIS"/>
    <property type="match status" value="1"/>
</dbReference>
<dbReference type="PROSITE" id="PS00381">
    <property type="entry name" value="CLP_PROTEASE_SER"/>
    <property type="match status" value="1"/>
</dbReference>
<reference key="1">
    <citation type="journal article" date="2008" name="Foodborne Pathog. Dis.">
        <title>The complete genome sequence and analysis of the human pathogen Campylobacter lari.</title>
        <authorList>
            <person name="Miller W.G."/>
            <person name="Wang G."/>
            <person name="Binnewies T.T."/>
            <person name="Parker C.T."/>
        </authorList>
    </citation>
    <scope>NUCLEOTIDE SEQUENCE [LARGE SCALE GENOMIC DNA]</scope>
    <source>
        <strain>RM2100 / D67 / ATCC BAA-1060</strain>
    </source>
</reference>